<keyword id="KW-0967">Endosome</keyword>
<keyword id="KW-0472">Membrane</keyword>
<keyword id="KW-0653">Protein transport</keyword>
<keyword id="KW-1185">Reference proteome</keyword>
<keyword id="KW-0728">SH3 domain</keyword>
<keyword id="KW-0813">Transport</keyword>
<protein>
    <recommendedName>
        <fullName>Class E vacuolar protein-sorting machinery protein hse1</fullName>
    </recommendedName>
</protein>
<gene>
    <name type="primary">hse1</name>
    <name type="ORF">AN2066</name>
</gene>
<dbReference type="EMBL" id="AACD01000032">
    <property type="protein sequence ID" value="EAA64898.1"/>
    <property type="molecule type" value="Genomic_DNA"/>
</dbReference>
<dbReference type="EMBL" id="BN001307">
    <property type="protein sequence ID" value="CBF86109.1"/>
    <property type="molecule type" value="Genomic_DNA"/>
</dbReference>
<dbReference type="RefSeq" id="XP_659670.1">
    <property type="nucleotide sequence ID" value="XM_654578.1"/>
</dbReference>
<dbReference type="SMR" id="Q5BBL4"/>
<dbReference type="FunCoup" id="Q5BBL4">
    <property type="interactions" value="337"/>
</dbReference>
<dbReference type="STRING" id="227321.Q5BBL4"/>
<dbReference type="EnsemblFungi" id="CBF86109">
    <property type="protein sequence ID" value="CBF86109"/>
    <property type="gene ID" value="ANIA_02066"/>
</dbReference>
<dbReference type="KEGG" id="ani:ANIA_02066"/>
<dbReference type="VEuPathDB" id="FungiDB:AN2066"/>
<dbReference type="eggNOG" id="KOG2199">
    <property type="taxonomic scope" value="Eukaryota"/>
</dbReference>
<dbReference type="HOGENOM" id="CLU_010104_1_1_1"/>
<dbReference type="InParanoid" id="Q5BBL4"/>
<dbReference type="OMA" id="QVYRDWW"/>
<dbReference type="OrthoDB" id="10255964at2759"/>
<dbReference type="Proteomes" id="UP000000560">
    <property type="component" value="Chromosome VII"/>
</dbReference>
<dbReference type="GO" id="GO:0010008">
    <property type="term" value="C:endosome membrane"/>
    <property type="evidence" value="ECO:0007669"/>
    <property type="project" value="UniProtKB-SubCell"/>
</dbReference>
<dbReference type="GO" id="GO:0033565">
    <property type="term" value="C:ESCRT-0 complex"/>
    <property type="evidence" value="ECO:0000318"/>
    <property type="project" value="GO_Central"/>
</dbReference>
<dbReference type="GO" id="GO:0035091">
    <property type="term" value="F:phosphatidylinositol binding"/>
    <property type="evidence" value="ECO:0007669"/>
    <property type="project" value="InterPro"/>
</dbReference>
<dbReference type="GO" id="GO:0043130">
    <property type="term" value="F:ubiquitin binding"/>
    <property type="evidence" value="ECO:0007669"/>
    <property type="project" value="InterPro"/>
</dbReference>
<dbReference type="GO" id="GO:0043328">
    <property type="term" value="P:protein transport to vacuole involved in ubiquitin-dependent protein catabolic process via the multivesicular body sorting pathway"/>
    <property type="evidence" value="ECO:0000318"/>
    <property type="project" value="GO_Central"/>
</dbReference>
<dbReference type="CDD" id="cd21386">
    <property type="entry name" value="GAT_Hse1"/>
    <property type="match status" value="1"/>
</dbReference>
<dbReference type="CDD" id="cd11805">
    <property type="entry name" value="SH3_GRB2_like_C"/>
    <property type="match status" value="1"/>
</dbReference>
<dbReference type="CDD" id="cd16978">
    <property type="entry name" value="VHS_HSE1"/>
    <property type="match status" value="1"/>
</dbReference>
<dbReference type="FunFam" id="2.30.30.40:FF:000072">
    <property type="entry name" value="Unconventional Myosin IB"/>
    <property type="match status" value="1"/>
</dbReference>
<dbReference type="Gene3D" id="1.20.5.1940">
    <property type="match status" value="1"/>
</dbReference>
<dbReference type="Gene3D" id="1.25.40.90">
    <property type="match status" value="1"/>
</dbReference>
<dbReference type="Gene3D" id="2.30.30.40">
    <property type="entry name" value="SH3 Domains"/>
    <property type="match status" value="1"/>
</dbReference>
<dbReference type="InterPro" id="IPR008942">
    <property type="entry name" value="ENTH_VHS"/>
</dbReference>
<dbReference type="InterPro" id="IPR004152">
    <property type="entry name" value="GAT_dom"/>
</dbReference>
<dbReference type="InterPro" id="IPR036028">
    <property type="entry name" value="SH3-like_dom_sf"/>
</dbReference>
<dbReference type="InterPro" id="IPR001452">
    <property type="entry name" value="SH3_domain"/>
</dbReference>
<dbReference type="InterPro" id="IPR050670">
    <property type="entry name" value="STAM"/>
</dbReference>
<dbReference type="InterPro" id="IPR002014">
    <property type="entry name" value="VHS_dom"/>
</dbReference>
<dbReference type="PANTHER" id="PTHR45929">
    <property type="entry name" value="JAK PATHWAY SIGNAL TRANSDUCTION ADAPTOR MOLECULE"/>
    <property type="match status" value="1"/>
</dbReference>
<dbReference type="PANTHER" id="PTHR45929:SF3">
    <property type="entry name" value="JAK PATHWAY SIGNAL TRANSDUCTION ADAPTOR MOLECULE"/>
    <property type="match status" value="1"/>
</dbReference>
<dbReference type="Pfam" id="PF03127">
    <property type="entry name" value="GAT"/>
    <property type="match status" value="1"/>
</dbReference>
<dbReference type="Pfam" id="PF00018">
    <property type="entry name" value="SH3_1"/>
    <property type="match status" value="1"/>
</dbReference>
<dbReference type="Pfam" id="PF00790">
    <property type="entry name" value="VHS"/>
    <property type="match status" value="1"/>
</dbReference>
<dbReference type="PRINTS" id="PR00452">
    <property type="entry name" value="SH3DOMAIN"/>
</dbReference>
<dbReference type="PRINTS" id="PR01887">
    <property type="entry name" value="SPECTRNALPHA"/>
</dbReference>
<dbReference type="SMART" id="SM00326">
    <property type="entry name" value="SH3"/>
    <property type="match status" value="1"/>
</dbReference>
<dbReference type="SMART" id="SM00288">
    <property type="entry name" value="VHS"/>
    <property type="match status" value="1"/>
</dbReference>
<dbReference type="SUPFAM" id="SSF48464">
    <property type="entry name" value="ENTH/VHS domain"/>
    <property type="match status" value="1"/>
</dbReference>
<dbReference type="SUPFAM" id="SSF50044">
    <property type="entry name" value="SH3-domain"/>
    <property type="match status" value="1"/>
</dbReference>
<dbReference type="PROSITE" id="PS50002">
    <property type="entry name" value="SH3"/>
    <property type="match status" value="1"/>
</dbReference>
<dbReference type="PROSITE" id="PS50179">
    <property type="entry name" value="VHS"/>
    <property type="match status" value="1"/>
</dbReference>
<evidence type="ECO:0000250" key="1"/>
<evidence type="ECO:0000255" key="2">
    <source>
        <dbReference type="PROSITE-ProRule" id="PRU00192"/>
    </source>
</evidence>
<evidence type="ECO:0000255" key="3">
    <source>
        <dbReference type="PROSITE-ProRule" id="PRU00218"/>
    </source>
</evidence>
<evidence type="ECO:0000256" key="4">
    <source>
        <dbReference type="SAM" id="MobiDB-lite"/>
    </source>
</evidence>
<evidence type="ECO:0000305" key="5"/>
<proteinExistence type="inferred from homology"/>
<organism>
    <name type="scientific">Emericella nidulans (strain FGSC A4 / ATCC 38163 / CBS 112.46 / NRRL 194 / M139)</name>
    <name type="common">Aspergillus nidulans</name>
    <dbReference type="NCBI Taxonomy" id="227321"/>
    <lineage>
        <taxon>Eukaryota</taxon>
        <taxon>Fungi</taxon>
        <taxon>Dikarya</taxon>
        <taxon>Ascomycota</taxon>
        <taxon>Pezizomycotina</taxon>
        <taxon>Eurotiomycetes</taxon>
        <taxon>Eurotiomycetidae</taxon>
        <taxon>Eurotiales</taxon>
        <taxon>Aspergillaceae</taxon>
        <taxon>Aspergillus</taxon>
        <taxon>Aspergillus subgen. Nidulantes</taxon>
    </lineage>
</organism>
<name>HSE1_EMENI</name>
<comment type="function">
    <text evidence="1">Component of the ESCRT-0 complex which is the sorting receptor for ubiquitinated cargo proteins at the multivesicular body (MVB).</text>
</comment>
<comment type="subunit">
    <text evidence="1">Component of the ESCRT-0 complex composed of HSE1 and VPS27.</text>
</comment>
<comment type="subcellular location">
    <subcellularLocation>
        <location evidence="1">Endosome membrane</location>
        <topology evidence="1">Peripheral membrane protein</topology>
        <orientation evidence="1">Cytoplasmic side</orientation>
    </subcellularLocation>
</comment>
<comment type="similarity">
    <text evidence="5">Belongs to the STAM family.</text>
</comment>
<reference key="1">
    <citation type="journal article" date="2005" name="Nature">
        <title>Sequencing of Aspergillus nidulans and comparative analysis with A. fumigatus and A. oryzae.</title>
        <authorList>
            <person name="Galagan J.E."/>
            <person name="Calvo S.E."/>
            <person name="Cuomo C."/>
            <person name="Ma L.-J."/>
            <person name="Wortman J.R."/>
            <person name="Batzoglou S."/>
            <person name="Lee S.-I."/>
            <person name="Bastuerkmen M."/>
            <person name="Spevak C.C."/>
            <person name="Clutterbuck J."/>
            <person name="Kapitonov V."/>
            <person name="Jurka J."/>
            <person name="Scazzocchio C."/>
            <person name="Farman M.L."/>
            <person name="Butler J."/>
            <person name="Purcell S."/>
            <person name="Harris S."/>
            <person name="Braus G.H."/>
            <person name="Draht O."/>
            <person name="Busch S."/>
            <person name="D'Enfert C."/>
            <person name="Bouchier C."/>
            <person name="Goldman G.H."/>
            <person name="Bell-Pedersen D."/>
            <person name="Griffiths-Jones S."/>
            <person name="Doonan J.H."/>
            <person name="Yu J."/>
            <person name="Vienken K."/>
            <person name="Pain A."/>
            <person name="Freitag M."/>
            <person name="Selker E.U."/>
            <person name="Archer D.B."/>
            <person name="Penalva M.A."/>
            <person name="Oakley B.R."/>
            <person name="Momany M."/>
            <person name="Tanaka T."/>
            <person name="Kumagai T."/>
            <person name="Asai K."/>
            <person name="Machida M."/>
            <person name="Nierman W.C."/>
            <person name="Denning D.W."/>
            <person name="Caddick M.X."/>
            <person name="Hynes M."/>
            <person name="Paoletti M."/>
            <person name="Fischer R."/>
            <person name="Miller B.L."/>
            <person name="Dyer P.S."/>
            <person name="Sachs M.S."/>
            <person name="Osmani S.A."/>
            <person name="Birren B.W."/>
        </authorList>
    </citation>
    <scope>NUCLEOTIDE SEQUENCE [LARGE SCALE GENOMIC DNA]</scope>
    <source>
        <strain>FGSC A4 / ATCC 38163 / CBS 112.46 / NRRL 194 / M139</strain>
    </source>
</reference>
<reference key="2">
    <citation type="journal article" date="2009" name="Fungal Genet. Biol.">
        <title>The 2008 update of the Aspergillus nidulans genome annotation: a community effort.</title>
        <authorList>
            <person name="Wortman J.R."/>
            <person name="Gilsenan J.M."/>
            <person name="Joardar V."/>
            <person name="Deegan J."/>
            <person name="Clutterbuck J."/>
            <person name="Andersen M.R."/>
            <person name="Archer D."/>
            <person name="Bencina M."/>
            <person name="Braus G."/>
            <person name="Coutinho P."/>
            <person name="von Dohren H."/>
            <person name="Doonan J."/>
            <person name="Driessen A.J."/>
            <person name="Durek P."/>
            <person name="Espeso E."/>
            <person name="Fekete E."/>
            <person name="Flipphi M."/>
            <person name="Estrada C.G."/>
            <person name="Geysens S."/>
            <person name="Goldman G."/>
            <person name="de Groot P.W."/>
            <person name="Hansen K."/>
            <person name="Harris S.D."/>
            <person name="Heinekamp T."/>
            <person name="Helmstaedt K."/>
            <person name="Henrissat B."/>
            <person name="Hofmann G."/>
            <person name="Homan T."/>
            <person name="Horio T."/>
            <person name="Horiuchi H."/>
            <person name="James S."/>
            <person name="Jones M."/>
            <person name="Karaffa L."/>
            <person name="Karanyi Z."/>
            <person name="Kato M."/>
            <person name="Keller N."/>
            <person name="Kelly D.E."/>
            <person name="Kiel J.A."/>
            <person name="Kim J.M."/>
            <person name="van der Klei I.J."/>
            <person name="Klis F.M."/>
            <person name="Kovalchuk A."/>
            <person name="Krasevec N."/>
            <person name="Kubicek C.P."/>
            <person name="Liu B."/>
            <person name="Maccabe A."/>
            <person name="Meyer V."/>
            <person name="Mirabito P."/>
            <person name="Miskei M."/>
            <person name="Mos M."/>
            <person name="Mullins J."/>
            <person name="Nelson D.R."/>
            <person name="Nielsen J."/>
            <person name="Oakley B.R."/>
            <person name="Osmani S.A."/>
            <person name="Pakula T."/>
            <person name="Paszewski A."/>
            <person name="Paulsen I."/>
            <person name="Pilsyk S."/>
            <person name="Pocsi I."/>
            <person name="Punt P.J."/>
            <person name="Ram A.F."/>
            <person name="Ren Q."/>
            <person name="Robellet X."/>
            <person name="Robson G."/>
            <person name="Seiboth B."/>
            <person name="van Solingen P."/>
            <person name="Specht T."/>
            <person name="Sun J."/>
            <person name="Taheri-Talesh N."/>
            <person name="Takeshita N."/>
            <person name="Ussery D."/>
            <person name="vanKuyk P.A."/>
            <person name="Visser H."/>
            <person name="van de Vondervoort P.J."/>
            <person name="de Vries R.P."/>
            <person name="Walton J."/>
            <person name="Xiang X."/>
            <person name="Xiong Y."/>
            <person name="Zeng A.P."/>
            <person name="Brandt B.W."/>
            <person name="Cornell M.J."/>
            <person name="van den Hondel C.A."/>
            <person name="Visser J."/>
            <person name="Oliver S.G."/>
            <person name="Turner G."/>
        </authorList>
    </citation>
    <scope>GENOME REANNOTATION</scope>
    <source>
        <strain>FGSC A4 / ATCC 38163 / CBS 112.46 / NRRL 194 / M139</strain>
    </source>
</reference>
<feature type="chain" id="PRO_0000292496" description="Class E vacuolar protein-sorting machinery protein hse1">
    <location>
        <begin position="1"/>
        <end position="581"/>
    </location>
</feature>
<feature type="domain" description="VHS" evidence="3">
    <location>
        <begin position="16"/>
        <end position="145"/>
    </location>
</feature>
<feature type="domain" description="UIM" evidence="5">
    <location>
        <begin position="162"/>
        <end position="181"/>
    </location>
</feature>
<feature type="domain" description="SH3" evidence="2">
    <location>
        <begin position="215"/>
        <end position="274"/>
    </location>
</feature>
<feature type="region of interest" description="Disordered" evidence="4">
    <location>
        <begin position="176"/>
        <end position="213"/>
    </location>
</feature>
<feature type="region of interest" description="Disordered" evidence="4">
    <location>
        <begin position="368"/>
        <end position="581"/>
    </location>
</feature>
<feature type="compositionally biased region" description="Low complexity" evidence="4">
    <location>
        <begin position="181"/>
        <end position="197"/>
    </location>
</feature>
<feature type="compositionally biased region" description="Low complexity" evidence="4">
    <location>
        <begin position="370"/>
        <end position="403"/>
    </location>
</feature>
<feature type="compositionally biased region" description="Low complexity" evidence="4">
    <location>
        <begin position="442"/>
        <end position="456"/>
    </location>
</feature>
<feature type="compositionally biased region" description="Polar residues" evidence="4">
    <location>
        <begin position="464"/>
        <end position="476"/>
    </location>
</feature>
<feature type="compositionally biased region" description="Polar residues" evidence="4">
    <location>
        <begin position="508"/>
        <end position="521"/>
    </location>
</feature>
<feature type="compositionally biased region" description="Pro residues" evidence="4">
    <location>
        <begin position="529"/>
        <end position="542"/>
    </location>
</feature>
<feature type="compositionally biased region" description="Low complexity" evidence="4">
    <location>
        <begin position="545"/>
        <end position="559"/>
    </location>
</feature>
<accession>Q5BBL4</accession>
<accession>C8VLP2</accession>
<sequence>MFRAQQNAFDDAVAKATDENLTSENWEYILDVCDKVGAEESGAKDAVAALIKRLAHRNANVQLYTLELANALAQNCGPKIHRELASRSFTDALLRLAGDRNTHQQVKSKILERMEDWTEMFASNPDFGIMEQAFMKLRTQNPNLQPPSKPGKREITDLDRQKEEEELQMALALSIREKSGSAPQPQVESSSSVSAPENQAQAAPAGPVPSGTSAATVSRVRALYDFQPSEPGELQFRKGDVIAVLESVYKDWWKGSLRGQTGIFPLNYVEKLPDPTVEELQREAQMEAEVFGQIKNVEKLLTLLSTRSSELNVQENEEITNLYNSTLSIRPKLVELIGKYSQKKDEFTQLNEKFIKARRDYESLLEASMAQPPQQQFGRPGQPQYGYPGSGAPAGYPRGPAQQHDPQRYFSPRPPDNQPNASYYPPATQSPGPGHTSPPGPYQQQPQQPAPDSYQPVHHRPESTYDQPQELGTSVYDSPVERLQYPPGPSGGQPHYQPPPQQTPQPDFSASSPNLVNQSQSPYPATPVTQPPPPTQQPPPVPGTASGSAPYPSASPSAANYQAYRPPQGGIPNHNPAAFYQ</sequence>